<proteinExistence type="evidence at protein level"/>
<feature type="transit peptide" description="Chloroplast" evidence="2">
    <location>
        <begin position="1"/>
        <end position="83"/>
    </location>
</feature>
<feature type="chain" id="PRO_0000000591" description="Dodecanoyl-[acyl-carrier-protein] hydrolase, chloroplastic">
    <location>
        <begin position="84"/>
        <end position="382"/>
    </location>
</feature>
<feature type="active site" evidence="3">
    <location>
        <position position="283"/>
    </location>
</feature>
<feature type="active site" evidence="3">
    <location>
        <position position="285"/>
    </location>
</feature>
<feature type="active site" evidence="1">
    <location>
        <position position="320"/>
    </location>
</feature>
<feature type="site" description="Important for catalytic activity" evidence="3">
    <location>
        <position position="281"/>
    </location>
</feature>
<feature type="site" description="Important for catalytic activity" evidence="3">
    <location>
        <position position="283"/>
    </location>
</feature>
<feature type="site" description="Important for catalytic activity" evidence="3">
    <location>
        <position position="285"/>
    </location>
</feature>
<feature type="site" description="Important for catalytic activity" evidence="3">
    <location>
        <position position="319"/>
    </location>
</feature>
<feature type="mutagenesis site" description="Loss of catalytic activity, when associated with E-276." evidence="3">
    <original>E</original>
    <variation>Q</variation>
    <location>
        <position position="135"/>
    </location>
</feature>
<feature type="mutagenesis site" description="Increases C14 substrate selectivity." evidence="3">
    <original>T</original>
    <variation>G</variation>
    <location>
        <position position="137"/>
    </location>
</feature>
<feature type="mutagenesis site" description="Loss of catalytic activity." evidence="3">
    <original>T</original>
    <variation>Y</variation>
    <location>
        <position position="137"/>
    </location>
</feature>
<feature type="mutagenesis site" description="Reduces catalytic activity 75-fold." evidence="3">
    <original>M</original>
    <variation>W</variation>
    <location>
        <position position="163"/>
    </location>
</feature>
<feature type="mutagenesis site" description="Converted to a 12:0/14:0 ACP TE with equal preference for both substrates; when associated with H-199. Converted to a 14:0 ACP TE; when associated with H-199 and K-231." evidence="4">
    <original>M</original>
    <variation>R</variation>
    <location>
        <position position="197"/>
    </location>
</feature>
<feature type="mutagenesis site" description="Reduces catalytic activity 2.5-fold." evidence="3">
    <original>M</original>
    <variation>R</variation>
    <location>
        <position position="197"/>
    </location>
</feature>
<feature type="mutagenesis site" description="Converted to a 12:0/14:0 ACP TE with equal preference for both substrates; when associated with R-197. Converted to a 14:0 ACP TE; when associated with R-197 and K-231." evidence="4">
    <original>R</original>
    <variation>H</variation>
    <location>
        <position position="199"/>
    </location>
</feature>
<feature type="mutagenesis site" description="Reduces catalytic activity 250-fold." evidence="3">
    <original>R</original>
    <variation>H</variation>
    <location>
        <position position="199"/>
    </location>
</feature>
<feature type="mutagenesis site" description="Reduces catalytic activity 7-fold." evidence="3">
    <original>F</original>
    <variation>W</variation>
    <location>
        <position position="201"/>
    </location>
</feature>
<feature type="mutagenesis site" description="Reduces catalytic activity 75-fold." evidence="3">
    <original>S</original>
    <variation>W</variation>
    <location>
        <position position="219"/>
    </location>
</feature>
<feature type="mutagenesis site" description="No effect on specificity. Converted to a 14:0 ACP TE; when associated with R-197 and H-199." evidence="4">
    <original>T</original>
    <variation>K</variation>
    <location>
        <position position="231"/>
    </location>
</feature>
<feature type="mutagenesis site" description="Loss of catalytic activity, when associated with Q-135." evidence="3">
    <original>R</original>
    <variation>E</variation>
    <location>
        <position position="276"/>
    </location>
</feature>
<feature type="mutagenesis site" description="Loss of catalytic activity." evidence="3">
    <original>D</original>
    <variation>N</variation>
    <location>
        <position position="281"/>
    </location>
</feature>
<feature type="mutagenesis site" description="Reduces catalytic activity 33-fold." evidence="3">
    <original>N</original>
    <variation>A</variation>
    <location>
        <position position="283"/>
    </location>
</feature>
<feature type="mutagenesis site" description="Loss of catalytic activity." evidence="3">
    <original>H</original>
    <variation>A</variation>
    <location>
        <position position="285"/>
    </location>
</feature>
<feature type="mutagenesis site" description="Reduces catalytic activity 33-fold." evidence="3">
    <original>E</original>
    <variation>A</variation>
    <location>
        <position position="319"/>
    </location>
</feature>
<feature type="mutagenesis site" description="Reduces catalytic activity 3-fold." evidence="3">
    <original>C</original>
    <variation>A</variation>
    <location>
        <position position="320"/>
    </location>
</feature>
<feature type="mutagenesis site" description="Decreased catalytic activity." evidence="4">
    <original>R</original>
    <variation>Q</variation>
    <location>
        <position position="327"/>
    </location>
</feature>
<feature type="helix" evidence="8">
    <location>
        <begin position="97"/>
        <end position="100"/>
    </location>
</feature>
<feature type="strand" evidence="8">
    <location>
        <begin position="107"/>
        <end position="112"/>
    </location>
</feature>
<feature type="helix" evidence="8">
    <location>
        <begin position="115"/>
        <end position="117"/>
    </location>
</feature>
<feature type="helix" evidence="8">
    <location>
        <begin position="126"/>
        <end position="143"/>
    </location>
</feature>
<feature type="strand" evidence="8">
    <location>
        <begin position="150"/>
        <end position="152"/>
    </location>
</feature>
<feature type="helix" evidence="8">
    <location>
        <begin position="155"/>
        <end position="159"/>
    </location>
</feature>
<feature type="strand" evidence="8">
    <location>
        <begin position="162"/>
        <end position="174"/>
    </location>
</feature>
<feature type="strand" evidence="8">
    <location>
        <begin position="182"/>
        <end position="192"/>
    </location>
</feature>
<feature type="turn" evidence="8">
    <location>
        <begin position="193"/>
        <end position="195"/>
    </location>
</feature>
<feature type="strand" evidence="8">
    <location>
        <begin position="196"/>
        <end position="205"/>
    </location>
</feature>
<feature type="turn" evidence="8">
    <location>
        <begin position="206"/>
        <end position="208"/>
    </location>
</feature>
<feature type="strand" evidence="8">
    <location>
        <begin position="211"/>
        <end position="223"/>
    </location>
</feature>
<feature type="turn" evidence="8">
    <location>
        <begin position="224"/>
        <end position="226"/>
    </location>
</feature>
<feature type="helix" evidence="8">
    <location>
        <begin position="234"/>
        <end position="240"/>
    </location>
</feature>
<feature type="helix" evidence="8">
    <location>
        <begin position="241"/>
        <end position="243"/>
    </location>
</feature>
<feature type="helix" evidence="8">
    <location>
        <begin position="252"/>
        <end position="254"/>
    </location>
</feature>
<feature type="strand" evidence="8">
    <location>
        <begin position="267"/>
        <end position="273"/>
    </location>
</feature>
<feature type="helix" evidence="8">
    <location>
        <begin position="277"/>
        <end position="279"/>
    </location>
</feature>
<feature type="helix" evidence="8">
    <location>
        <begin position="288"/>
        <end position="296"/>
    </location>
</feature>
<feature type="helix" evidence="8">
    <location>
        <begin position="301"/>
        <end position="306"/>
    </location>
</feature>
<feature type="strand" evidence="8">
    <location>
        <begin position="307"/>
        <end position="316"/>
    </location>
</feature>
<feature type="strand" evidence="8">
    <location>
        <begin position="326"/>
        <end position="333"/>
    </location>
</feature>
<feature type="strand" evidence="8">
    <location>
        <begin position="336"/>
        <end position="339"/>
    </location>
</feature>
<feature type="strand" evidence="8">
    <location>
        <begin position="341"/>
        <end position="348"/>
    </location>
</feature>
<feature type="strand" evidence="8">
    <location>
        <begin position="350"/>
        <end position="352"/>
    </location>
</feature>
<feature type="strand" evidence="8">
    <location>
        <begin position="354"/>
        <end position="364"/>
    </location>
</feature>
<organism>
    <name type="scientific">Umbellularia californica</name>
    <name type="common">California bay laurel</name>
    <name type="synonym">Tetranthera californica</name>
    <dbReference type="NCBI Taxonomy" id="3438"/>
    <lineage>
        <taxon>Eukaryota</taxon>
        <taxon>Viridiplantae</taxon>
        <taxon>Streptophyta</taxon>
        <taxon>Embryophyta</taxon>
        <taxon>Tracheophyta</taxon>
        <taxon>Spermatophyta</taxon>
        <taxon>Magnoliopsida</taxon>
        <taxon>Magnoliidae</taxon>
        <taxon>Laurales</taxon>
        <taxon>Lauraceae</taxon>
        <taxon>Umbellularia</taxon>
    </lineage>
</organism>
<accession>Q41635</accession>
<reference key="1">
    <citation type="journal article" date="1992" name="Science">
        <title>Fatty acid biosynthesis redirected to medium chains in transgenic oilseed plants.</title>
        <authorList>
            <person name="Voelker T.A."/>
            <person name="Worrell A.C."/>
            <person name="Anderson L."/>
            <person name="Bleibaum J."/>
            <person name="Fan C."/>
            <person name="Hawkins D.J."/>
            <person name="Radke S.E."/>
            <person name="Davies H.M."/>
        </authorList>
    </citation>
    <scope>NUCLEOTIDE SEQUENCE [MRNA]</scope>
    <scope>PROTEIN SEQUENCE OF 84-91</scope>
    <scope>FUNCTION</scope>
    <scope>TISSUE SPECIFICITY</scope>
    <scope>CATALYTIC ACTIVITY</scope>
</reference>
<reference key="2">
    <citation type="journal article" date="1995" name="Proc. Natl. Acad. Sci. U.S.A.">
        <title>Modification of the substrate specificity of an acyl-acyl carrier protein thioesterase by protein engineering.</title>
        <authorList>
            <person name="Yuan L."/>
            <person name="Voelker T.A."/>
            <person name="Hawkins D.J."/>
        </authorList>
    </citation>
    <scope>FUNCTION</scope>
    <scope>MUTAGENESIS OF MET-197; ARG-199; THR-231 AND ARG-327</scope>
    <scope>CATALYTIC ACTIVITY</scope>
    <scope>BIOPHYSICOCHEMICAL PROPERTIES</scope>
</reference>
<reference key="3">
    <citation type="journal article" date="2014" name="PLoS ONE">
        <title>Finding sequences for over 270 orphan enzymes.</title>
        <authorList>
            <person name="Shearer A.G."/>
            <person name="Altman T."/>
            <person name="Rhee C.D."/>
        </authorList>
    </citation>
    <scope>IDENTIFICATION</scope>
</reference>
<reference key="4">
    <citation type="journal article" date="2017" name="ACS Chem. Biol.">
        <title>Structural insight into acyl-ACP thioesterase toward substrate specificity design.</title>
        <authorList>
            <person name="Feng Y."/>
            <person name="Wang Y."/>
            <person name="Liu J."/>
            <person name="Liu Y."/>
            <person name="Cao X."/>
            <person name="Xue S."/>
        </authorList>
    </citation>
    <scope>X-RAY CRYSTALLOGRAPHY (2.43 ANGSTROMS) OF 97-365</scope>
    <scope>FUNCTION</scope>
    <scope>CATALYTIC ACTIVITY</scope>
    <scope>ACTIVE SITE</scope>
    <scope>SUBUNIT</scope>
    <scope>MUTAGENESIS OF GLU-135; THR-137; MET-163; MET-197; ARG-199; PHE-201; SER-219; ARG-276; ASP-281; ASN-283; HIS-285; GLU-319 AND CYS-320</scope>
</reference>
<evidence type="ECO:0000255" key="1"/>
<evidence type="ECO:0000269" key="2">
    <source>
    </source>
</evidence>
<evidence type="ECO:0000269" key="3">
    <source>
    </source>
</evidence>
<evidence type="ECO:0000269" key="4">
    <source>
    </source>
</evidence>
<evidence type="ECO:0000303" key="5">
    <source>
    </source>
</evidence>
<evidence type="ECO:0000303" key="6">
    <source>
    </source>
</evidence>
<evidence type="ECO:0000305" key="7"/>
<evidence type="ECO:0007829" key="8">
    <source>
        <dbReference type="PDB" id="5X04"/>
    </source>
</evidence>
<comment type="function">
    <text evidence="2 3 4">Plays an essential role in chain termination during de novo fatty acid synthesis. High thioesterase activity for lauroyl-ACP versus other acyl-ACPs.</text>
</comment>
<comment type="catalytic activity">
    <reaction evidence="2 3">
        <text>dodecanoyl-[ACP] + H2O = dodecanoate + holo-[ACP] + H(+)</text>
        <dbReference type="Rhea" id="RHEA:30119"/>
        <dbReference type="Rhea" id="RHEA-COMP:9644"/>
        <dbReference type="Rhea" id="RHEA-COMP:9685"/>
        <dbReference type="ChEBI" id="CHEBI:15377"/>
        <dbReference type="ChEBI" id="CHEBI:15378"/>
        <dbReference type="ChEBI" id="CHEBI:18262"/>
        <dbReference type="ChEBI" id="CHEBI:64479"/>
        <dbReference type="ChEBI" id="CHEBI:65264"/>
        <dbReference type="EC" id="3.1.2.21"/>
    </reaction>
</comment>
<comment type="biophysicochemical properties">
    <kinetics>
        <KM evidence="4">1.9 uM for 12:0-[acyl-carrier-protein]</KM>
        <KM evidence="4">6.4 uM for 14:0-[acyl-carrier-protein]</KM>
    </kinetics>
</comment>
<comment type="subunit">
    <text evidence="3">Forms homodimers.</text>
</comment>
<comment type="subcellular location">
    <subcellularLocation>
        <location evidence="5">Plastid</location>
        <location evidence="5">Chloroplast</location>
    </subcellularLocation>
</comment>
<comment type="tissue specificity">
    <text evidence="5">Expressed in developing cotyledons. Not detected in leaves.</text>
</comment>
<comment type="biotechnology">
    <text>Introduced by genetic manipulation and expressed in canola by Monsanto (Calgene) so as to obtain laurate-rich seeds.</text>
</comment>
<comment type="similarity">
    <text evidence="7">Belongs to the acyl-ACP thioesterase family.</text>
</comment>
<gene>
    <name evidence="6" type="primary">FATB1</name>
    <name type="synonym">FATB</name>
</gene>
<name>FATB_UMBCA</name>
<keyword id="KW-0002">3D-structure</keyword>
<keyword id="KW-0150">Chloroplast</keyword>
<keyword id="KW-0903">Direct protein sequencing</keyword>
<keyword id="KW-0275">Fatty acid biosynthesis</keyword>
<keyword id="KW-0276">Fatty acid metabolism</keyword>
<keyword id="KW-0308">Genetically modified food</keyword>
<keyword id="KW-0378">Hydrolase</keyword>
<keyword id="KW-0444">Lipid biosynthesis</keyword>
<keyword id="KW-0443">Lipid metabolism</keyword>
<keyword id="KW-0934">Plastid</keyword>
<keyword id="KW-0809">Transit peptide</keyword>
<dbReference type="EC" id="3.1.2.21" evidence="2 3"/>
<dbReference type="EMBL" id="M94159">
    <property type="protein sequence ID" value="AAA34215.1"/>
    <property type="molecule type" value="mRNA"/>
</dbReference>
<dbReference type="PIR" id="A40229">
    <property type="entry name" value="A40229"/>
</dbReference>
<dbReference type="PDB" id="5X04">
    <property type="method" value="X-ray"/>
    <property type="resolution" value="2.43 A"/>
    <property type="chains" value="A/B=97-365"/>
</dbReference>
<dbReference type="PDBsum" id="5X04"/>
<dbReference type="SMR" id="Q41635"/>
<dbReference type="BRENDA" id="3.1.2.14">
    <property type="organism ID" value="6562"/>
</dbReference>
<dbReference type="BRENDA" id="3.1.2.21">
    <property type="organism ID" value="6562"/>
</dbReference>
<dbReference type="SABIO-RK" id="Q41635"/>
<dbReference type="GO" id="GO:0009507">
    <property type="term" value="C:chloroplast"/>
    <property type="evidence" value="ECO:0007669"/>
    <property type="project" value="UniProtKB-SubCell"/>
</dbReference>
<dbReference type="GO" id="GO:0000036">
    <property type="term" value="F:acyl carrier activity"/>
    <property type="evidence" value="ECO:0007669"/>
    <property type="project" value="TreeGrafter"/>
</dbReference>
<dbReference type="GO" id="GO:0016297">
    <property type="term" value="F:fatty acyl-[ACP] hydrolase activity"/>
    <property type="evidence" value="ECO:0007669"/>
    <property type="project" value="UniProtKB-EC"/>
</dbReference>
<dbReference type="CDD" id="cd00586">
    <property type="entry name" value="4HBT"/>
    <property type="match status" value="1"/>
</dbReference>
<dbReference type="FunFam" id="3.10.129.10:FF:000014">
    <property type="entry name" value="Acyl-[acyl-carrier-protein] hydrolase"/>
    <property type="match status" value="1"/>
</dbReference>
<dbReference type="Gene3D" id="3.10.129.10">
    <property type="entry name" value="Hotdog Thioesterase"/>
    <property type="match status" value="1"/>
</dbReference>
<dbReference type="InterPro" id="IPR021113">
    <property type="entry name" value="Acyl-ACP-thioesterase_N"/>
</dbReference>
<dbReference type="InterPro" id="IPR049427">
    <property type="entry name" value="Acyl-ACP_TE_C"/>
</dbReference>
<dbReference type="InterPro" id="IPR002864">
    <property type="entry name" value="Acyl-ACP_thioesterase_NHD"/>
</dbReference>
<dbReference type="InterPro" id="IPR045023">
    <property type="entry name" value="FATA/B"/>
</dbReference>
<dbReference type="InterPro" id="IPR029069">
    <property type="entry name" value="HotDog_dom_sf"/>
</dbReference>
<dbReference type="PANTHER" id="PTHR31727">
    <property type="entry name" value="OLEOYL-ACYL CARRIER PROTEIN THIOESTERASE 1, CHLOROPLASTIC"/>
    <property type="match status" value="1"/>
</dbReference>
<dbReference type="PANTHER" id="PTHR31727:SF2">
    <property type="entry name" value="PALMITOYL-ACYL CARRIER PROTEIN THIOESTERASE, CHLOROPLASTIC"/>
    <property type="match status" value="1"/>
</dbReference>
<dbReference type="Pfam" id="PF01643">
    <property type="entry name" value="Acyl-ACP_TE"/>
    <property type="match status" value="1"/>
</dbReference>
<dbReference type="Pfam" id="PF20791">
    <property type="entry name" value="Acyl-ACP_TE_C"/>
    <property type="match status" value="1"/>
</dbReference>
<dbReference type="Pfam" id="PF12590">
    <property type="entry name" value="Acyl-thio_N"/>
    <property type="match status" value="1"/>
</dbReference>
<dbReference type="SUPFAM" id="SSF54637">
    <property type="entry name" value="Thioesterase/thiol ester dehydrase-isomerase"/>
    <property type="match status" value="2"/>
</dbReference>
<protein>
    <recommendedName>
        <fullName evidence="7">Dodecanoyl-[acyl-carrier-protein] hydrolase, chloroplastic</fullName>
        <ecNumber evidence="2 3">3.1.2.21</ecNumber>
    </recommendedName>
    <alternativeName>
        <fullName>12:0-acyl-carrier protein thioesterase</fullName>
        <shortName>12:0-ACP thioesterase</shortName>
    </alternativeName>
    <alternativeName>
        <fullName>Acyl-[acyl-carrier-protein] hydrolase</fullName>
    </alternativeName>
    <alternativeName>
        <fullName>BTE</fullName>
    </alternativeName>
    <alternativeName>
        <fullName>Lauroyl-acyl carrier protein thioesterase</fullName>
    </alternativeName>
    <alternativeName>
        <fullName evidence="6">UcFatB1</fullName>
    </alternativeName>
</protein>
<sequence length="382" mass="42915">MATTSLASAFCSMKAVMLARDGRGMKPRSSDLQLRAGNAPTSLKMINGTKFSYTESLKRLPDWSMLFAVITTIFSAAEKQWTNLEWKPKPKLPQLLDDHFGLHGLVFRRTFAIRSYEVGPDRSTSILAVMNHMQEATLNHAKSVGILGDGFGTTLEMSKRDLMWVVRRTHVAVERYPTWGDTVEVECWIGASGNNGMRRDFLVRDCKTGEILTRCTSLSVLMNTRTRRLSTIPDEVRGEIGPAFIDNVAVKDDEIKKLQKLNDSTADYIQGGLTPRWNDLDVNQHVNNLKYVAWVFETVPDSIFESHHISSFTLEYRRECTRDSVLRSLTTVSGGSSEAGLVCDHLLQLEGGSEVLRARTEWRPKLTDSFRGISVIPAEPRV</sequence>